<accession>B4SXB1</accession>
<gene>
    <name evidence="1" type="primary">gpsA</name>
    <name type="ordered locus">SNSL254_A3980</name>
</gene>
<dbReference type="EC" id="1.1.1.94" evidence="1"/>
<dbReference type="EMBL" id="CP001113">
    <property type="protein sequence ID" value="ACF64405.1"/>
    <property type="molecule type" value="Genomic_DNA"/>
</dbReference>
<dbReference type="RefSeq" id="WP_001076596.1">
    <property type="nucleotide sequence ID" value="NZ_CCMR01000004.1"/>
</dbReference>
<dbReference type="SMR" id="B4SXB1"/>
<dbReference type="KEGG" id="see:SNSL254_A3980"/>
<dbReference type="HOGENOM" id="CLU_033449_0_2_6"/>
<dbReference type="UniPathway" id="UPA00940"/>
<dbReference type="Proteomes" id="UP000008824">
    <property type="component" value="Chromosome"/>
</dbReference>
<dbReference type="GO" id="GO:0005829">
    <property type="term" value="C:cytosol"/>
    <property type="evidence" value="ECO:0007669"/>
    <property type="project" value="TreeGrafter"/>
</dbReference>
<dbReference type="GO" id="GO:0047952">
    <property type="term" value="F:glycerol-3-phosphate dehydrogenase [NAD(P)+] activity"/>
    <property type="evidence" value="ECO:0007669"/>
    <property type="project" value="UniProtKB-UniRule"/>
</dbReference>
<dbReference type="GO" id="GO:0051287">
    <property type="term" value="F:NAD binding"/>
    <property type="evidence" value="ECO:0007669"/>
    <property type="project" value="InterPro"/>
</dbReference>
<dbReference type="GO" id="GO:0005975">
    <property type="term" value="P:carbohydrate metabolic process"/>
    <property type="evidence" value="ECO:0007669"/>
    <property type="project" value="InterPro"/>
</dbReference>
<dbReference type="GO" id="GO:0046167">
    <property type="term" value="P:glycerol-3-phosphate biosynthetic process"/>
    <property type="evidence" value="ECO:0007669"/>
    <property type="project" value="UniProtKB-UniRule"/>
</dbReference>
<dbReference type="GO" id="GO:0046168">
    <property type="term" value="P:glycerol-3-phosphate catabolic process"/>
    <property type="evidence" value="ECO:0007669"/>
    <property type="project" value="InterPro"/>
</dbReference>
<dbReference type="GO" id="GO:0046474">
    <property type="term" value="P:glycerophospholipid biosynthetic process"/>
    <property type="evidence" value="ECO:0007669"/>
    <property type="project" value="TreeGrafter"/>
</dbReference>
<dbReference type="FunFam" id="1.10.1040.10:FF:000001">
    <property type="entry name" value="Glycerol-3-phosphate dehydrogenase [NAD(P)+]"/>
    <property type="match status" value="1"/>
</dbReference>
<dbReference type="FunFam" id="3.40.50.720:FF:000019">
    <property type="entry name" value="Glycerol-3-phosphate dehydrogenase [NAD(P)+]"/>
    <property type="match status" value="1"/>
</dbReference>
<dbReference type="Gene3D" id="1.10.1040.10">
    <property type="entry name" value="N-(1-d-carboxylethyl)-l-norvaline Dehydrogenase, domain 2"/>
    <property type="match status" value="1"/>
</dbReference>
<dbReference type="Gene3D" id="3.40.50.720">
    <property type="entry name" value="NAD(P)-binding Rossmann-like Domain"/>
    <property type="match status" value="1"/>
</dbReference>
<dbReference type="HAMAP" id="MF_00394">
    <property type="entry name" value="NAD_Glyc3P_dehydrog"/>
    <property type="match status" value="1"/>
</dbReference>
<dbReference type="InterPro" id="IPR008927">
    <property type="entry name" value="6-PGluconate_DH-like_C_sf"/>
</dbReference>
<dbReference type="InterPro" id="IPR013328">
    <property type="entry name" value="6PGD_dom2"/>
</dbReference>
<dbReference type="InterPro" id="IPR006168">
    <property type="entry name" value="G3P_DH_NAD-dep"/>
</dbReference>
<dbReference type="InterPro" id="IPR006109">
    <property type="entry name" value="G3P_DH_NAD-dep_C"/>
</dbReference>
<dbReference type="InterPro" id="IPR011128">
    <property type="entry name" value="G3P_DH_NAD-dep_N"/>
</dbReference>
<dbReference type="InterPro" id="IPR036291">
    <property type="entry name" value="NAD(P)-bd_dom_sf"/>
</dbReference>
<dbReference type="NCBIfam" id="NF000939">
    <property type="entry name" value="PRK00094.1-1"/>
    <property type="match status" value="1"/>
</dbReference>
<dbReference type="NCBIfam" id="NF000940">
    <property type="entry name" value="PRK00094.1-2"/>
    <property type="match status" value="1"/>
</dbReference>
<dbReference type="NCBIfam" id="NF000942">
    <property type="entry name" value="PRK00094.1-4"/>
    <property type="match status" value="1"/>
</dbReference>
<dbReference type="PANTHER" id="PTHR11728">
    <property type="entry name" value="GLYCEROL-3-PHOSPHATE DEHYDROGENASE"/>
    <property type="match status" value="1"/>
</dbReference>
<dbReference type="PANTHER" id="PTHR11728:SF1">
    <property type="entry name" value="GLYCEROL-3-PHOSPHATE DEHYDROGENASE [NAD(+)] 2, CHLOROPLASTIC"/>
    <property type="match status" value="1"/>
</dbReference>
<dbReference type="Pfam" id="PF07479">
    <property type="entry name" value="NAD_Gly3P_dh_C"/>
    <property type="match status" value="1"/>
</dbReference>
<dbReference type="Pfam" id="PF01210">
    <property type="entry name" value="NAD_Gly3P_dh_N"/>
    <property type="match status" value="1"/>
</dbReference>
<dbReference type="PIRSF" id="PIRSF000114">
    <property type="entry name" value="Glycerol-3-P_dh"/>
    <property type="match status" value="1"/>
</dbReference>
<dbReference type="PRINTS" id="PR00077">
    <property type="entry name" value="GPDHDRGNASE"/>
</dbReference>
<dbReference type="SUPFAM" id="SSF48179">
    <property type="entry name" value="6-phosphogluconate dehydrogenase C-terminal domain-like"/>
    <property type="match status" value="1"/>
</dbReference>
<dbReference type="SUPFAM" id="SSF51735">
    <property type="entry name" value="NAD(P)-binding Rossmann-fold domains"/>
    <property type="match status" value="1"/>
</dbReference>
<dbReference type="PROSITE" id="PS00957">
    <property type="entry name" value="NAD_G3PDH"/>
    <property type="match status" value="1"/>
</dbReference>
<proteinExistence type="inferred from homology"/>
<feature type="chain" id="PRO_1000123185" description="Glycerol-3-phosphate dehydrogenase [NAD(P)+]">
    <location>
        <begin position="1"/>
        <end position="339"/>
    </location>
</feature>
<feature type="active site" description="Proton acceptor" evidence="1">
    <location>
        <position position="195"/>
    </location>
</feature>
<feature type="binding site" evidence="1">
    <location>
        <position position="15"/>
    </location>
    <ligand>
        <name>NADPH</name>
        <dbReference type="ChEBI" id="CHEBI:57783"/>
    </ligand>
</feature>
<feature type="binding site" evidence="1">
    <location>
        <position position="16"/>
    </location>
    <ligand>
        <name>NADPH</name>
        <dbReference type="ChEBI" id="CHEBI:57783"/>
    </ligand>
</feature>
<feature type="binding site" evidence="1">
    <location>
        <position position="36"/>
    </location>
    <ligand>
        <name>NADPH</name>
        <dbReference type="ChEBI" id="CHEBI:57783"/>
    </ligand>
</feature>
<feature type="binding site" evidence="1">
    <location>
        <position position="110"/>
    </location>
    <ligand>
        <name>NADPH</name>
        <dbReference type="ChEBI" id="CHEBI:57783"/>
    </ligand>
</feature>
<feature type="binding site" evidence="1">
    <location>
        <position position="110"/>
    </location>
    <ligand>
        <name>sn-glycerol 3-phosphate</name>
        <dbReference type="ChEBI" id="CHEBI:57597"/>
    </ligand>
</feature>
<feature type="binding site" evidence="1">
    <location>
        <position position="139"/>
    </location>
    <ligand>
        <name>sn-glycerol 3-phosphate</name>
        <dbReference type="ChEBI" id="CHEBI:57597"/>
    </ligand>
</feature>
<feature type="binding site" evidence="1">
    <location>
        <position position="141"/>
    </location>
    <ligand>
        <name>sn-glycerol 3-phosphate</name>
        <dbReference type="ChEBI" id="CHEBI:57597"/>
    </ligand>
</feature>
<feature type="binding site" evidence="1">
    <location>
        <position position="143"/>
    </location>
    <ligand>
        <name>NADPH</name>
        <dbReference type="ChEBI" id="CHEBI:57783"/>
    </ligand>
</feature>
<feature type="binding site" evidence="1">
    <location>
        <position position="195"/>
    </location>
    <ligand>
        <name>sn-glycerol 3-phosphate</name>
        <dbReference type="ChEBI" id="CHEBI:57597"/>
    </ligand>
</feature>
<feature type="binding site" evidence="1">
    <location>
        <position position="248"/>
    </location>
    <ligand>
        <name>sn-glycerol 3-phosphate</name>
        <dbReference type="ChEBI" id="CHEBI:57597"/>
    </ligand>
</feature>
<feature type="binding site" evidence="1">
    <location>
        <position position="258"/>
    </location>
    <ligand>
        <name>sn-glycerol 3-phosphate</name>
        <dbReference type="ChEBI" id="CHEBI:57597"/>
    </ligand>
</feature>
<feature type="binding site" evidence="1">
    <location>
        <position position="259"/>
    </location>
    <ligand>
        <name>NADPH</name>
        <dbReference type="ChEBI" id="CHEBI:57783"/>
    </ligand>
</feature>
<feature type="binding site" evidence="1">
    <location>
        <position position="259"/>
    </location>
    <ligand>
        <name>sn-glycerol 3-phosphate</name>
        <dbReference type="ChEBI" id="CHEBI:57597"/>
    </ligand>
</feature>
<feature type="binding site" evidence="1">
    <location>
        <position position="260"/>
    </location>
    <ligand>
        <name>sn-glycerol 3-phosphate</name>
        <dbReference type="ChEBI" id="CHEBI:57597"/>
    </ligand>
</feature>
<feature type="binding site" evidence="1">
    <location>
        <position position="283"/>
    </location>
    <ligand>
        <name>NADPH</name>
        <dbReference type="ChEBI" id="CHEBI:57783"/>
    </ligand>
</feature>
<feature type="binding site" evidence="1">
    <location>
        <position position="285"/>
    </location>
    <ligand>
        <name>NADPH</name>
        <dbReference type="ChEBI" id="CHEBI:57783"/>
    </ligand>
</feature>
<reference key="1">
    <citation type="journal article" date="2011" name="J. Bacteriol.">
        <title>Comparative genomics of 28 Salmonella enterica isolates: evidence for CRISPR-mediated adaptive sublineage evolution.</title>
        <authorList>
            <person name="Fricke W.F."/>
            <person name="Mammel M.K."/>
            <person name="McDermott P.F."/>
            <person name="Tartera C."/>
            <person name="White D.G."/>
            <person name="Leclerc J.E."/>
            <person name="Ravel J."/>
            <person name="Cebula T.A."/>
        </authorList>
    </citation>
    <scope>NUCLEOTIDE SEQUENCE [LARGE SCALE GENOMIC DNA]</scope>
    <source>
        <strain>SL254</strain>
    </source>
</reference>
<keyword id="KW-0963">Cytoplasm</keyword>
<keyword id="KW-0444">Lipid biosynthesis</keyword>
<keyword id="KW-0443">Lipid metabolism</keyword>
<keyword id="KW-0520">NAD</keyword>
<keyword id="KW-0521">NADP</keyword>
<keyword id="KW-0547">Nucleotide-binding</keyword>
<keyword id="KW-0560">Oxidoreductase</keyword>
<keyword id="KW-0594">Phospholipid biosynthesis</keyword>
<keyword id="KW-1208">Phospholipid metabolism</keyword>
<organism>
    <name type="scientific">Salmonella newport (strain SL254)</name>
    <dbReference type="NCBI Taxonomy" id="423368"/>
    <lineage>
        <taxon>Bacteria</taxon>
        <taxon>Pseudomonadati</taxon>
        <taxon>Pseudomonadota</taxon>
        <taxon>Gammaproteobacteria</taxon>
        <taxon>Enterobacterales</taxon>
        <taxon>Enterobacteriaceae</taxon>
        <taxon>Salmonella</taxon>
    </lineage>
</organism>
<name>GPDA_SALNS</name>
<sequence length="339" mass="36343">MNQSNASMTVIGAGSYGTALAITLARNGHQVVLWGHDPKHIATLEHDRCNVAFLPDVPFPDTLHLESDLATALAASRNILVVVPSHVFSDVLRQIKPLMRPDARLVWATKGLEAETGRLLQDVAREALGDQIPLAVISGPTFAKELAAGLPTAISLASTDETFADDLQQLLHCGKSFRVYINADFIGVQLGGAVKNVIAIGAGMSDGIGFGANARTALITRGLTEMSRLGAALGADPATFMGMAGLGDLVLTCTDNQSRNRRFGMMLGQGMDVKGAQDKIGQVVEGYRNTKEVRELAHRFGVEMPITEEIYQVLYCGKNAREAALTLLGRARKEELSRH</sequence>
<comment type="function">
    <text evidence="1">Catalyzes the reduction of the glycolytic intermediate dihydroxyacetone phosphate (DHAP) to sn-glycerol 3-phosphate (G3P), the key precursor for phospholipid synthesis.</text>
</comment>
<comment type="catalytic activity">
    <reaction evidence="1">
        <text>sn-glycerol 3-phosphate + NAD(+) = dihydroxyacetone phosphate + NADH + H(+)</text>
        <dbReference type="Rhea" id="RHEA:11092"/>
        <dbReference type="ChEBI" id="CHEBI:15378"/>
        <dbReference type="ChEBI" id="CHEBI:57540"/>
        <dbReference type="ChEBI" id="CHEBI:57597"/>
        <dbReference type="ChEBI" id="CHEBI:57642"/>
        <dbReference type="ChEBI" id="CHEBI:57945"/>
        <dbReference type="EC" id="1.1.1.94"/>
    </reaction>
    <physiologicalReaction direction="right-to-left" evidence="1">
        <dbReference type="Rhea" id="RHEA:11094"/>
    </physiologicalReaction>
</comment>
<comment type="catalytic activity">
    <reaction evidence="1">
        <text>sn-glycerol 3-phosphate + NADP(+) = dihydroxyacetone phosphate + NADPH + H(+)</text>
        <dbReference type="Rhea" id="RHEA:11096"/>
        <dbReference type="ChEBI" id="CHEBI:15378"/>
        <dbReference type="ChEBI" id="CHEBI:57597"/>
        <dbReference type="ChEBI" id="CHEBI:57642"/>
        <dbReference type="ChEBI" id="CHEBI:57783"/>
        <dbReference type="ChEBI" id="CHEBI:58349"/>
        <dbReference type="EC" id="1.1.1.94"/>
    </reaction>
    <physiologicalReaction direction="right-to-left" evidence="1">
        <dbReference type="Rhea" id="RHEA:11098"/>
    </physiologicalReaction>
</comment>
<comment type="pathway">
    <text evidence="1">Membrane lipid metabolism; glycerophospholipid metabolism.</text>
</comment>
<comment type="subcellular location">
    <subcellularLocation>
        <location evidence="1">Cytoplasm</location>
    </subcellularLocation>
</comment>
<comment type="similarity">
    <text evidence="1">Belongs to the NAD-dependent glycerol-3-phosphate dehydrogenase family.</text>
</comment>
<evidence type="ECO:0000255" key="1">
    <source>
        <dbReference type="HAMAP-Rule" id="MF_00394"/>
    </source>
</evidence>
<protein>
    <recommendedName>
        <fullName evidence="1">Glycerol-3-phosphate dehydrogenase [NAD(P)+]</fullName>
        <ecNumber evidence="1">1.1.1.94</ecNumber>
    </recommendedName>
    <alternativeName>
        <fullName evidence="1">NAD(P)(+)-dependent glycerol-3-phosphate dehydrogenase</fullName>
    </alternativeName>
    <alternativeName>
        <fullName evidence="1">NAD(P)H-dependent dihydroxyacetone-phosphate reductase</fullName>
    </alternativeName>
</protein>